<name>3S12_HYDCY</name>
<protein>
    <recommendedName>
        <fullName>Short neurotoxin 2</fullName>
    </recommendedName>
    <alternativeName>
        <fullName>Hydrophitoxin b</fullName>
    </alternativeName>
</protein>
<comment type="function">
    <text evidence="2">Binds to muscle nicotinic acetylcholine receptor (nAChR) and inhibit acetylcholine from binding to the receptor, thereby impairing neuromuscular transmission.</text>
</comment>
<comment type="subcellular location">
    <subcellularLocation>
        <location evidence="3">Secreted</location>
    </subcellularLocation>
</comment>
<comment type="tissue specificity">
    <text evidence="4">Expressed by the venom gland.</text>
</comment>
<comment type="toxic dose">
    <text evidence="3">LD(50) is 0.085 mg/kg by intravenous injection.</text>
</comment>
<comment type="similarity">
    <text evidence="4">Belongs to the three-finger toxin family. Short-chain subfamily. Type I alpha-neurotoxin sub-subfamily.</text>
</comment>
<accession>P62376</accession>
<accession>A1EC57</accession>
<accession>P01436</accession>
<accession>P25493</accession>
<proteinExistence type="evidence at protein level"/>
<sequence>PLLLTLVVVTIVCLDLGYTMTCCNQQSSQPKTTTNCAESSCYKKTWSDHRGTRIERGCGCPQVKSGIKLECCHTNECNN</sequence>
<dbReference type="EMBL" id="EF121774">
    <property type="protein sequence ID" value="ABL61579.1"/>
    <property type="molecule type" value="mRNA"/>
</dbReference>
<dbReference type="SMR" id="P62376"/>
<dbReference type="GO" id="GO:0005576">
    <property type="term" value="C:extracellular region"/>
    <property type="evidence" value="ECO:0007669"/>
    <property type="project" value="UniProtKB-SubCell"/>
</dbReference>
<dbReference type="GO" id="GO:0030550">
    <property type="term" value="F:acetylcholine receptor inhibitor activity"/>
    <property type="evidence" value="ECO:0007669"/>
    <property type="project" value="UniProtKB-KW"/>
</dbReference>
<dbReference type="GO" id="GO:0099106">
    <property type="term" value="F:ion channel regulator activity"/>
    <property type="evidence" value="ECO:0007669"/>
    <property type="project" value="UniProtKB-KW"/>
</dbReference>
<dbReference type="GO" id="GO:0090729">
    <property type="term" value="F:toxin activity"/>
    <property type="evidence" value="ECO:0007669"/>
    <property type="project" value="UniProtKB-KW"/>
</dbReference>
<dbReference type="CDD" id="cd00206">
    <property type="entry name" value="TFP_snake_toxin"/>
    <property type="match status" value="1"/>
</dbReference>
<dbReference type="Gene3D" id="2.10.60.10">
    <property type="entry name" value="CD59"/>
    <property type="match status" value="1"/>
</dbReference>
<dbReference type="InterPro" id="IPR003571">
    <property type="entry name" value="Snake_3FTx"/>
</dbReference>
<dbReference type="InterPro" id="IPR045860">
    <property type="entry name" value="Snake_toxin-like_sf"/>
</dbReference>
<dbReference type="InterPro" id="IPR018354">
    <property type="entry name" value="Snake_toxin_con_site"/>
</dbReference>
<dbReference type="InterPro" id="IPR054131">
    <property type="entry name" value="Toxin_cobra-type"/>
</dbReference>
<dbReference type="Pfam" id="PF21947">
    <property type="entry name" value="Toxin_cobra-type"/>
    <property type="match status" value="1"/>
</dbReference>
<dbReference type="SUPFAM" id="SSF57302">
    <property type="entry name" value="Snake toxin-like"/>
    <property type="match status" value="1"/>
</dbReference>
<dbReference type="PROSITE" id="PS00272">
    <property type="entry name" value="SNAKE_TOXIN"/>
    <property type="match status" value="1"/>
</dbReference>
<evidence type="ECO:0000250" key="1">
    <source>
        <dbReference type="UniProtKB" id="P0C1Z0"/>
    </source>
</evidence>
<evidence type="ECO:0000250" key="2">
    <source>
        <dbReference type="UniProtKB" id="P60775"/>
    </source>
</evidence>
<evidence type="ECO:0000269" key="3">
    <source>
    </source>
</evidence>
<evidence type="ECO:0000305" key="4"/>
<reference key="1">
    <citation type="submission" date="2006-11" db="EMBL/GenBank/DDBJ databases">
        <title>The study of the neurotoxins in sea snake using cDNA phage display technology.</title>
        <authorList>
            <person name="Tan T."/>
            <person name="Bi Q."/>
            <person name="Xiang X."/>
            <person name="Zhu S."/>
        </authorList>
    </citation>
    <scope>NUCLEOTIDE SEQUENCE [MRNA]</scope>
    <source>
        <tissue>Venom gland</tissue>
    </source>
</reference>
<reference key="2">
    <citation type="journal article" date="1974" name="Toxicon">
        <title>Hydrophitoxin b from Hydrophis cyanocinctus venom.</title>
        <authorList>
            <person name="Lui C.-S."/>
            <person name="Blackwell R.Q."/>
        </authorList>
    </citation>
    <scope>PROTEIN SEQUENCE OF 20-79</scope>
    <scope>TOXIC DOSE</scope>
    <scope>SUBCELLULAR LOCATION</scope>
    <source>
        <tissue>Venom</tissue>
    </source>
</reference>
<organism>
    <name type="scientific">Hydrophis cyanocinctus</name>
    <name type="common">Asian annulated sea snake</name>
    <name type="synonym">Leioselasma cyanocincta</name>
    <dbReference type="NCBI Taxonomy" id="8686"/>
    <lineage>
        <taxon>Eukaryota</taxon>
        <taxon>Metazoa</taxon>
        <taxon>Chordata</taxon>
        <taxon>Craniata</taxon>
        <taxon>Vertebrata</taxon>
        <taxon>Euteleostomi</taxon>
        <taxon>Lepidosauria</taxon>
        <taxon>Squamata</taxon>
        <taxon>Bifurcata</taxon>
        <taxon>Unidentata</taxon>
        <taxon>Episquamata</taxon>
        <taxon>Toxicofera</taxon>
        <taxon>Serpentes</taxon>
        <taxon>Colubroidea</taxon>
        <taxon>Elapidae</taxon>
        <taxon>Hydrophiinae</taxon>
        <taxon>Hydrophis</taxon>
    </lineage>
</organism>
<feature type="signal peptide" evidence="3">
    <location>
        <begin position="1" status="less than"/>
        <end position="19"/>
    </location>
</feature>
<feature type="chain" id="PRO_0000093578" description="Short neurotoxin 2" evidence="3">
    <location>
        <begin position="20"/>
        <end position="79"/>
    </location>
</feature>
<feature type="disulfide bond" evidence="1">
    <location>
        <begin position="22"/>
        <end position="41"/>
    </location>
</feature>
<feature type="disulfide bond" evidence="1">
    <location>
        <begin position="36"/>
        <end position="58"/>
    </location>
</feature>
<feature type="disulfide bond" evidence="1">
    <location>
        <begin position="60"/>
        <end position="71"/>
    </location>
</feature>
<feature type="disulfide bond" evidence="1">
    <location>
        <begin position="72"/>
        <end position="77"/>
    </location>
</feature>
<feature type="non-terminal residue">
    <location>
        <position position="1"/>
    </location>
</feature>
<keyword id="KW-0008">Acetylcholine receptor inhibiting toxin</keyword>
<keyword id="KW-0903">Direct protein sequencing</keyword>
<keyword id="KW-1015">Disulfide bond</keyword>
<keyword id="KW-0872">Ion channel impairing toxin</keyword>
<keyword id="KW-0528">Neurotoxin</keyword>
<keyword id="KW-0629">Postsynaptic neurotoxin</keyword>
<keyword id="KW-0964">Secreted</keyword>
<keyword id="KW-0732">Signal</keyword>
<keyword id="KW-0800">Toxin</keyword>